<sequence>NPVDDIXIAKPRDIPMNPMXIYRSP</sequence>
<proteinExistence type="evidence at protein level"/>
<protein>
    <recommendedName>
        <fullName>Antithrombin-III</fullName>
        <shortName>ATIII</shortName>
    </recommendedName>
    <alternativeName>
        <fullName>Serpin C1</fullName>
    </alternativeName>
</protein>
<evidence type="ECO:0000250" key="1"/>
<evidence type="ECO:0000250" key="2">
    <source>
        <dbReference type="UniProtKB" id="P01008"/>
    </source>
</evidence>
<evidence type="ECO:0000305" key="3"/>
<feature type="chain" id="PRO_0000094124" description="Antithrombin-III">
    <location>
        <begin position="1"/>
        <end position="25" status="greater than"/>
    </location>
</feature>
<feature type="non-terminal residue">
    <location>
        <position position="25"/>
    </location>
</feature>
<dbReference type="STRING" id="10036.ENSMAUP00000021913"/>
<dbReference type="MEROPS" id="I04.026"/>
<dbReference type="eggNOG" id="KOG2392">
    <property type="taxonomic scope" value="Eukaryota"/>
</dbReference>
<dbReference type="Proteomes" id="UP000189706">
    <property type="component" value="Unplaced"/>
</dbReference>
<dbReference type="GO" id="GO:0005576">
    <property type="term" value="C:extracellular region"/>
    <property type="evidence" value="ECO:0007669"/>
    <property type="project" value="UniProtKB-SubCell"/>
</dbReference>
<dbReference type="GO" id="GO:0008201">
    <property type="term" value="F:heparin binding"/>
    <property type="evidence" value="ECO:0007669"/>
    <property type="project" value="UniProtKB-KW"/>
</dbReference>
<dbReference type="GO" id="GO:0004867">
    <property type="term" value="F:serine-type endopeptidase inhibitor activity"/>
    <property type="evidence" value="ECO:0007669"/>
    <property type="project" value="UniProtKB-KW"/>
</dbReference>
<dbReference type="GO" id="GO:0007596">
    <property type="term" value="P:blood coagulation"/>
    <property type="evidence" value="ECO:0007669"/>
    <property type="project" value="UniProtKB-KW"/>
</dbReference>
<gene>
    <name type="primary">SERPINC1</name>
    <name type="synonym">AT3</name>
</gene>
<accession>P81050</accession>
<organism>
    <name type="scientific">Mesocricetus auratus</name>
    <name type="common">Golden hamster</name>
    <dbReference type="NCBI Taxonomy" id="10036"/>
    <lineage>
        <taxon>Eukaryota</taxon>
        <taxon>Metazoa</taxon>
        <taxon>Chordata</taxon>
        <taxon>Craniata</taxon>
        <taxon>Vertebrata</taxon>
        <taxon>Euteleostomi</taxon>
        <taxon>Mammalia</taxon>
        <taxon>Eutheria</taxon>
        <taxon>Euarchontoglires</taxon>
        <taxon>Glires</taxon>
        <taxon>Rodentia</taxon>
        <taxon>Myomorpha</taxon>
        <taxon>Muroidea</taxon>
        <taxon>Cricetidae</taxon>
        <taxon>Cricetinae</taxon>
        <taxon>Mesocricetus</taxon>
    </lineage>
</organism>
<keyword id="KW-0094">Blood coagulation</keyword>
<keyword id="KW-0903">Direct protein sequencing</keyword>
<keyword id="KW-0356">Hemostasis</keyword>
<keyword id="KW-0358">Heparin-binding</keyword>
<keyword id="KW-0646">Protease inhibitor</keyword>
<keyword id="KW-1185">Reference proteome</keyword>
<keyword id="KW-0964">Secreted</keyword>
<keyword id="KW-0722">Serine protease inhibitor</keyword>
<comment type="function">
    <text evidence="1">Most important serine protease inhibitor in plasma that regulates the blood coagulation cascade. AT-III inhibits thrombin, matriptase-3/TMPRSS7, as well as factors IXa, Xa and XIa. Its inhibitory activity is greatly enhanced in the presence of heparin (By similarity).</text>
</comment>
<comment type="subunit">
    <text evidence="1">Forms protease inhibiting heterodimer with TMPRSS7.</text>
</comment>
<comment type="subcellular location">
    <subcellularLocation>
        <location evidence="1">Secreted</location>
        <location evidence="1">Extracellular space</location>
    </subcellularLocation>
</comment>
<comment type="tissue specificity">
    <text>Plasma.</text>
</comment>
<comment type="PTM">
    <text evidence="2">Phosphorylated by FAM20C in the extracellular medium.</text>
</comment>
<comment type="similarity">
    <text evidence="3">Belongs to the serpin family.</text>
</comment>
<name>ANT3_MESAU</name>
<reference key="1">
    <citation type="journal article" date="1996" name="Comp. Biochem. Physiol.">
        <title>Hamster antithrombin III: purification, characterization and acute phase response.</title>
        <authorList>
            <person name="Mak P."/>
            <person name="Enghild J.J."/>
            <person name="Dubin A."/>
        </authorList>
    </citation>
    <scope>PROTEIN SEQUENCE</scope>
</reference>